<sequence>MQPFVLYNSEQRKKVEFVPRKEGHIDMYVCGMTVYDYCHIGHARVMVAFDYIIRFLRSQGWKVRYIRNITDIDDKIIKRANENGETIQQLTMRFIDAMNEDAANLGCLAPDEAPKATEYIDQMQNMIGNLVNKGAAYPASNGDVYFEVTKFEKYGRLSGRKLDDMQAGASERVDVEVEKKHPFDFVLWKHAKENEPSWASPWGNGRPGWHIECSAMSTCCLGNHFDIHGGGSDLMFPHHENEIAQSEASTGEQYVNYWIHVGFINVDGEKMSKSLGNFFTIRDVMEKFHPEVIRYFIVSSHYRSPVNFSDVALKEAKTSLTRFYHSFKAYQQVYGQTTTETLDQSFVERFNNAMCDDFNTAEAMAVLFELNKELNRAVKEEQADQATVLYSTLRHLTNILGLVQHNVDDFLKSDIGQEALALSDAEIEDFIQQRVDAKKAKDFAKADSIRQSLLEQGVVLEDTRQGTVWRRAD</sequence>
<proteinExistence type="inferred from homology"/>
<organism>
    <name type="scientific">Acinetobacter baumannii (strain SDF)</name>
    <dbReference type="NCBI Taxonomy" id="509170"/>
    <lineage>
        <taxon>Bacteria</taxon>
        <taxon>Pseudomonadati</taxon>
        <taxon>Pseudomonadota</taxon>
        <taxon>Gammaproteobacteria</taxon>
        <taxon>Moraxellales</taxon>
        <taxon>Moraxellaceae</taxon>
        <taxon>Acinetobacter</taxon>
        <taxon>Acinetobacter calcoaceticus/baumannii complex</taxon>
    </lineage>
</organism>
<comment type="catalytic activity">
    <reaction evidence="1">
        <text>tRNA(Cys) + L-cysteine + ATP = L-cysteinyl-tRNA(Cys) + AMP + diphosphate</text>
        <dbReference type="Rhea" id="RHEA:17773"/>
        <dbReference type="Rhea" id="RHEA-COMP:9661"/>
        <dbReference type="Rhea" id="RHEA-COMP:9679"/>
        <dbReference type="ChEBI" id="CHEBI:30616"/>
        <dbReference type="ChEBI" id="CHEBI:33019"/>
        <dbReference type="ChEBI" id="CHEBI:35235"/>
        <dbReference type="ChEBI" id="CHEBI:78442"/>
        <dbReference type="ChEBI" id="CHEBI:78517"/>
        <dbReference type="ChEBI" id="CHEBI:456215"/>
        <dbReference type="EC" id="6.1.1.16"/>
    </reaction>
</comment>
<comment type="cofactor">
    <cofactor evidence="1">
        <name>Zn(2+)</name>
        <dbReference type="ChEBI" id="CHEBI:29105"/>
    </cofactor>
    <text evidence="1">Binds 1 zinc ion per subunit.</text>
</comment>
<comment type="subunit">
    <text evidence="1">Monomer.</text>
</comment>
<comment type="subcellular location">
    <subcellularLocation>
        <location evidence="1">Cytoplasm</location>
    </subcellularLocation>
</comment>
<comment type="similarity">
    <text evidence="1">Belongs to the class-I aminoacyl-tRNA synthetase family.</text>
</comment>
<feature type="chain" id="PRO_1000090810" description="Cysteine--tRNA ligase">
    <location>
        <begin position="1"/>
        <end position="473"/>
    </location>
</feature>
<feature type="short sequence motif" description="'HIGH' region">
    <location>
        <begin position="32"/>
        <end position="42"/>
    </location>
</feature>
<feature type="short sequence motif" description="'KMSKS' region">
    <location>
        <begin position="270"/>
        <end position="274"/>
    </location>
</feature>
<feature type="binding site" evidence="1">
    <location>
        <position position="30"/>
    </location>
    <ligand>
        <name>Zn(2+)</name>
        <dbReference type="ChEBI" id="CHEBI:29105"/>
    </ligand>
</feature>
<feature type="binding site" evidence="1">
    <location>
        <position position="213"/>
    </location>
    <ligand>
        <name>Zn(2+)</name>
        <dbReference type="ChEBI" id="CHEBI:29105"/>
    </ligand>
</feature>
<feature type="binding site" evidence="1">
    <location>
        <position position="238"/>
    </location>
    <ligand>
        <name>Zn(2+)</name>
        <dbReference type="ChEBI" id="CHEBI:29105"/>
    </ligand>
</feature>
<feature type="binding site" evidence="1">
    <location>
        <position position="242"/>
    </location>
    <ligand>
        <name>Zn(2+)</name>
        <dbReference type="ChEBI" id="CHEBI:29105"/>
    </ligand>
</feature>
<feature type="binding site" evidence="1">
    <location>
        <position position="273"/>
    </location>
    <ligand>
        <name>ATP</name>
        <dbReference type="ChEBI" id="CHEBI:30616"/>
    </ligand>
</feature>
<gene>
    <name evidence="1" type="primary">cysS</name>
    <name type="ordered locus">ABSDF2325</name>
</gene>
<reference key="1">
    <citation type="journal article" date="2008" name="PLoS ONE">
        <title>Comparative analysis of Acinetobacters: three genomes for three lifestyles.</title>
        <authorList>
            <person name="Vallenet D."/>
            <person name="Nordmann P."/>
            <person name="Barbe V."/>
            <person name="Poirel L."/>
            <person name="Mangenot S."/>
            <person name="Bataille E."/>
            <person name="Dossat C."/>
            <person name="Gas S."/>
            <person name="Kreimeyer A."/>
            <person name="Lenoble P."/>
            <person name="Oztas S."/>
            <person name="Poulain J."/>
            <person name="Segurens B."/>
            <person name="Robert C."/>
            <person name="Abergel C."/>
            <person name="Claverie J.-M."/>
            <person name="Raoult D."/>
            <person name="Medigue C."/>
            <person name="Weissenbach J."/>
            <person name="Cruveiller S."/>
        </authorList>
    </citation>
    <scope>NUCLEOTIDE SEQUENCE [LARGE SCALE GENOMIC DNA]</scope>
    <source>
        <strain>SDF</strain>
    </source>
</reference>
<accession>B0VS71</accession>
<evidence type="ECO:0000255" key="1">
    <source>
        <dbReference type="HAMAP-Rule" id="MF_00041"/>
    </source>
</evidence>
<keyword id="KW-0030">Aminoacyl-tRNA synthetase</keyword>
<keyword id="KW-0067">ATP-binding</keyword>
<keyword id="KW-0963">Cytoplasm</keyword>
<keyword id="KW-0436">Ligase</keyword>
<keyword id="KW-0479">Metal-binding</keyword>
<keyword id="KW-0547">Nucleotide-binding</keyword>
<keyword id="KW-0648">Protein biosynthesis</keyword>
<keyword id="KW-0862">Zinc</keyword>
<dbReference type="EC" id="6.1.1.16" evidence="1"/>
<dbReference type="EMBL" id="CU468230">
    <property type="protein sequence ID" value="CAP01639.2"/>
    <property type="molecule type" value="Genomic_DNA"/>
</dbReference>
<dbReference type="SMR" id="B0VS71"/>
<dbReference type="KEGG" id="abm:ABSDF2325"/>
<dbReference type="HOGENOM" id="CLU_013528_0_1_6"/>
<dbReference type="Proteomes" id="UP000001741">
    <property type="component" value="Chromosome"/>
</dbReference>
<dbReference type="GO" id="GO:0005829">
    <property type="term" value="C:cytosol"/>
    <property type="evidence" value="ECO:0007669"/>
    <property type="project" value="TreeGrafter"/>
</dbReference>
<dbReference type="GO" id="GO:0005524">
    <property type="term" value="F:ATP binding"/>
    <property type="evidence" value="ECO:0007669"/>
    <property type="project" value="UniProtKB-UniRule"/>
</dbReference>
<dbReference type="GO" id="GO:0004817">
    <property type="term" value="F:cysteine-tRNA ligase activity"/>
    <property type="evidence" value="ECO:0007669"/>
    <property type="project" value="UniProtKB-UniRule"/>
</dbReference>
<dbReference type="GO" id="GO:0008270">
    <property type="term" value="F:zinc ion binding"/>
    <property type="evidence" value="ECO:0007669"/>
    <property type="project" value="UniProtKB-UniRule"/>
</dbReference>
<dbReference type="GO" id="GO:0006423">
    <property type="term" value="P:cysteinyl-tRNA aminoacylation"/>
    <property type="evidence" value="ECO:0007669"/>
    <property type="project" value="UniProtKB-UniRule"/>
</dbReference>
<dbReference type="CDD" id="cd07963">
    <property type="entry name" value="Anticodon_Ia_Cys"/>
    <property type="match status" value="1"/>
</dbReference>
<dbReference type="CDD" id="cd00672">
    <property type="entry name" value="CysRS_core"/>
    <property type="match status" value="1"/>
</dbReference>
<dbReference type="FunFam" id="3.40.50.620:FF:000009">
    <property type="entry name" value="Cysteine--tRNA ligase"/>
    <property type="match status" value="1"/>
</dbReference>
<dbReference type="Gene3D" id="1.20.120.1910">
    <property type="entry name" value="Cysteine-tRNA ligase, C-terminal anti-codon recognition domain"/>
    <property type="match status" value="1"/>
</dbReference>
<dbReference type="Gene3D" id="3.40.50.620">
    <property type="entry name" value="HUPs"/>
    <property type="match status" value="1"/>
</dbReference>
<dbReference type="HAMAP" id="MF_00041">
    <property type="entry name" value="Cys_tRNA_synth"/>
    <property type="match status" value="1"/>
</dbReference>
<dbReference type="InterPro" id="IPR015803">
    <property type="entry name" value="Cys-tRNA-ligase"/>
</dbReference>
<dbReference type="InterPro" id="IPR015273">
    <property type="entry name" value="Cys-tRNA-synt_Ia_DALR"/>
</dbReference>
<dbReference type="InterPro" id="IPR024909">
    <property type="entry name" value="Cys-tRNA/MSH_ligase"/>
</dbReference>
<dbReference type="InterPro" id="IPR014729">
    <property type="entry name" value="Rossmann-like_a/b/a_fold"/>
</dbReference>
<dbReference type="InterPro" id="IPR032678">
    <property type="entry name" value="tRNA-synt_1_cat_dom"/>
</dbReference>
<dbReference type="InterPro" id="IPR009080">
    <property type="entry name" value="tRNAsynth_Ia_anticodon-bd"/>
</dbReference>
<dbReference type="NCBIfam" id="TIGR00435">
    <property type="entry name" value="cysS"/>
    <property type="match status" value="1"/>
</dbReference>
<dbReference type="PANTHER" id="PTHR10890:SF3">
    <property type="entry name" value="CYSTEINE--TRNA LIGASE, CYTOPLASMIC"/>
    <property type="match status" value="1"/>
</dbReference>
<dbReference type="PANTHER" id="PTHR10890">
    <property type="entry name" value="CYSTEINYL-TRNA SYNTHETASE"/>
    <property type="match status" value="1"/>
</dbReference>
<dbReference type="Pfam" id="PF09190">
    <property type="entry name" value="DALR_2"/>
    <property type="match status" value="1"/>
</dbReference>
<dbReference type="Pfam" id="PF01406">
    <property type="entry name" value="tRNA-synt_1e"/>
    <property type="match status" value="1"/>
</dbReference>
<dbReference type="PRINTS" id="PR00983">
    <property type="entry name" value="TRNASYNTHCYS"/>
</dbReference>
<dbReference type="SMART" id="SM00840">
    <property type="entry name" value="DALR_2"/>
    <property type="match status" value="1"/>
</dbReference>
<dbReference type="SUPFAM" id="SSF47323">
    <property type="entry name" value="Anticodon-binding domain of a subclass of class I aminoacyl-tRNA synthetases"/>
    <property type="match status" value="1"/>
</dbReference>
<dbReference type="SUPFAM" id="SSF52374">
    <property type="entry name" value="Nucleotidylyl transferase"/>
    <property type="match status" value="1"/>
</dbReference>
<protein>
    <recommendedName>
        <fullName evidence="1">Cysteine--tRNA ligase</fullName>
        <ecNumber evidence="1">6.1.1.16</ecNumber>
    </recommendedName>
    <alternativeName>
        <fullName evidence="1">Cysteinyl-tRNA synthetase</fullName>
        <shortName evidence="1">CysRS</shortName>
    </alternativeName>
</protein>
<name>SYC_ACIBS</name>